<name>YDCL_ECOLI</name>
<evidence type="ECO:0000255" key="1">
    <source>
        <dbReference type="PROSITE-ProRule" id="PRU00303"/>
    </source>
</evidence>
<evidence type="ECO:0000305" key="2"/>
<gene>
    <name type="primary">ydcL</name>
    <name type="ordered locus">b1431</name>
    <name type="ordered locus">JW1427</name>
</gene>
<organism>
    <name type="scientific">Escherichia coli (strain K12)</name>
    <dbReference type="NCBI Taxonomy" id="83333"/>
    <lineage>
        <taxon>Bacteria</taxon>
        <taxon>Pseudomonadati</taxon>
        <taxon>Pseudomonadota</taxon>
        <taxon>Gammaproteobacteria</taxon>
        <taxon>Enterobacterales</taxon>
        <taxon>Enterobacteriaceae</taxon>
        <taxon>Escherichia</taxon>
    </lineage>
</organism>
<keyword id="KW-1003">Cell membrane</keyword>
<keyword id="KW-0449">Lipoprotein</keyword>
<keyword id="KW-0472">Membrane</keyword>
<keyword id="KW-0564">Palmitate</keyword>
<keyword id="KW-1185">Reference proteome</keyword>
<keyword id="KW-0732">Signal</keyword>
<accession>P64451</accession>
<accession>P76101</accession>
<accession>Q2MBC0</accession>
<reference key="1">
    <citation type="journal article" date="1997" name="Science">
        <title>The complete genome sequence of Escherichia coli K-12.</title>
        <authorList>
            <person name="Blattner F.R."/>
            <person name="Plunkett G. III"/>
            <person name="Bloch C.A."/>
            <person name="Perna N.T."/>
            <person name="Burland V."/>
            <person name="Riley M."/>
            <person name="Collado-Vides J."/>
            <person name="Glasner J.D."/>
            <person name="Rode C.K."/>
            <person name="Mayhew G.F."/>
            <person name="Gregor J."/>
            <person name="Davis N.W."/>
            <person name="Kirkpatrick H.A."/>
            <person name="Goeden M.A."/>
            <person name="Rose D.J."/>
            <person name="Mau B."/>
            <person name="Shao Y."/>
        </authorList>
    </citation>
    <scope>NUCLEOTIDE SEQUENCE [LARGE SCALE GENOMIC DNA]</scope>
    <source>
        <strain>K12 / MG1655 / ATCC 47076</strain>
    </source>
</reference>
<reference key="2">
    <citation type="journal article" date="2006" name="Mol. Syst. Biol.">
        <title>Highly accurate genome sequences of Escherichia coli K-12 strains MG1655 and W3110.</title>
        <authorList>
            <person name="Hayashi K."/>
            <person name="Morooka N."/>
            <person name="Yamamoto Y."/>
            <person name="Fujita K."/>
            <person name="Isono K."/>
            <person name="Choi S."/>
            <person name="Ohtsubo E."/>
            <person name="Baba T."/>
            <person name="Wanner B.L."/>
            <person name="Mori H."/>
            <person name="Horiuchi T."/>
        </authorList>
    </citation>
    <scope>NUCLEOTIDE SEQUENCE [LARGE SCALE GENOMIC DNA]</scope>
    <source>
        <strain>K12 / W3110 / ATCC 27325 / DSM 5911</strain>
    </source>
</reference>
<protein>
    <recommendedName>
        <fullName>Uncharacterized lipoprotein YdcL</fullName>
    </recommendedName>
</protein>
<comment type="subcellular location">
    <subcellularLocation>
        <location evidence="2">Cell membrane</location>
        <topology evidence="2">Lipid-anchor</topology>
    </subcellularLocation>
</comment>
<feature type="signal peptide" evidence="1">
    <location>
        <begin position="1"/>
        <end position="20"/>
    </location>
</feature>
<feature type="chain" id="PRO_0000013836" description="Uncharacterized lipoprotein YdcL">
    <location>
        <begin position="21"/>
        <end position="222"/>
    </location>
</feature>
<feature type="lipid moiety-binding region" description="N-palmitoyl cysteine" evidence="1">
    <location>
        <position position="21"/>
    </location>
</feature>
<feature type="lipid moiety-binding region" description="S-diacylglycerol cysteine" evidence="1">
    <location>
        <position position="21"/>
    </location>
</feature>
<sequence length="222" mass="24427">MRTTSFAKVAALCGLLALSGCASKITQPDKYSGFLNNYSDLKETTSATGKPVLRWVDPSFDQSKYDSIVWNPITYYPVPKPSTQVGQKVLDKILNYTNTEMKEAIAQRKPLVTTAGPRSLIFRGAITGVDTSKEGLQFYEVVPVALVVAGTQMATGHRTMDTRLYFEGELIDAATNKPVIKVVRQGEGKDLNNESTPMAFENIKQVIDDMATDATMFDVNKK</sequence>
<dbReference type="EMBL" id="U00096">
    <property type="protein sequence ID" value="AAC74513.1"/>
    <property type="molecule type" value="Genomic_DNA"/>
</dbReference>
<dbReference type="EMBL" id="AP009048">
    <property type="protein sequence ID" value="BAE76436.1"/>
    <property type="molecule type" value="Genomic_DNA"/>
</dbReference>
<dbReference type="PIR" id="B64895">
    <property type="entry name" value="B64895"/>
</dbReference>
<dbReference type="RefSeq" id="NP_415948.1">
    <property type="nucleotide sequence ID" value="NC_000913.3"/>
</dbReference>
<dbReference type="RefSeq" id="WP_001261013.1">
    <property type="nucleotide sequence ID" value="NZ_STEB01000005.1"/>
</dbReference>
<dbReference type="SMR" id="P64451"/>
<dbReference type="BioGRID" id="4259563">
    <property type="interactions" value="146"/>
</dbReference>
<dbReference type="DIP" id="DIP-47883N"/>
<dbReference type="FunCoup" id="P64451">
    <property type="interactions" value="16"/>
</dbReference>
<dbReference type="IntAct" id="P64451">
    <property type="interactions" value="4"/>
</dbReference>
<dbReference type="STRING" id="511145.b1431"/>
<dbReference type="jPOST" id="P64451"/>
<dbReference type="PaxDb" id="511145-b1431"/>
<dbReference type="EnsemblBacteria" id="AAC74513">
    <property type="protein sequence ID" value="AAC74513"/>
    <property type="gene ID" value="b1431"/>
</dbReference>
<dbReference type="GeneID" id="948203"/>
<dbReference type="KEGG" id="ecj:JW1427"/>
<dbReference type="KEGG" id="eco:b1431"/>
<dbReference type="KEGG" id="ecoc:C3026_08325"/>
<dbReference type="PATRIC" id="fig|1411691.4.peg.839"/>
<dbReference type="EchoBASE" id="EB3518"/>
<dbReference type="eggNOG" id="ENOG502Z8IX">
    <property type="taxonomic scope" value="Bacteria"/>
</dbReference>
<dbReference type="HOGENOM" id="CLU_088489_0_1_6"/>
<dbReference type="InParanoid" id="P64451"/>
<dbReference type="OMA" id="SGHRTQN"/>
<dbReference type="OrthoDB" id="6192874at2"/>
<dbReference type="PhylomeDB" id="P64451"/>
<dbReference type="BioCyc" id="EcoCyc:G6742-MONOMER"/>
<dbReference type="PRO" id="PR:P64451"/>
<dbReference type="Proteomes" id="UP000000625">
    <property type="component" value="Chromosome"/>
</dbReference>
<dbReference type="GO" id="GO:0005886">
    <property type="term" value="C:plasma membrane"/>
    <property type="evidence" value="ECO:0007669"/>
    <property type="project" value="UniProtKB-SubCell"/>
</dbReference>
<dbReference type="InterPro" id="IPR021747">
    <property type="entry name" value="DUF3313"/>
</dbReference>
<dbReference type="Pfam" id="PF11769">
    <property type="entry name" value="DUF3313"/>
    <property type="match status" value="1"/>
</dbReference>
<dbReference type="PROSITE" id="PS51257">
    <property type="entry name" value="PROKAR_LIPOPROTEIN"/>
    <property type="match status" value="1"/>
</dbReference>
<proteinExistence type="inferred from homology"/>